<organism>
    <name type="scientific">Vesicomyosocius okutanii subsp. Calyptogena okutanii (strain HA)</name>
    <dbReference type="NCBI Taxonomy" id="412965"/>
    <lineage>
        <taxon>Bacteria</taxon>
        <taxon>Pseudomonadati</taxon>
        <taxon>Pseudomonadota</taxon>
        <taxon>Gammaproteobacteria</taxon>
        <taxon>Candidatus Pseudothioglobaceae</taxon>
        <taxon>Candidatus Vesicomyosocius</taxon>
    </lineage>
</organism>
<dbReference type="EC" id="2.5.1.19" evidence="1"/>
<dbReference type="EMBL" id="AP009247">
    <property type="protein sequence ID" value="BAF61692.1"/>
    <property type="molecule type" value="Genomic_DNA"/>
</dbReference>
<dbReference type="RefSeq" id="WP_011929962.1">
    <property type="nucleotide sequence ID" value="NC_009465.1"/>
</dbReference>
<dbReference type="SMR" id="A5CWH5"/>
<dbReference type="STRING" id="412965.COSY_0576"/>
<dbReference type="KEGG" id="vok:COSY_0576"/>
<dbReference type="eggNOG" id="COG0128">
    <property type="taxonomic scope" value="Bacteria"/>
</dbReference>
<dbReference type="HOGENOM" id="CLU_024321_0_1_6"/>
<dbReference type="OrthoDB" id="9809920at2"/>
<dbReference type="UniPathway" id="UPA00053">
    <property type="reaction ID" value="UER00089"/>
</dbReference>
<dbReference type="Proteomes" id="UP000000247">
    <property type="component" value="Chromosome"/>
</dbReference>
<dbReference type="GO" id="GO:0005737">
    <property type="term" value="C:cytoplasm"/>
    <property type="evidence" value="ECO:0007669"/>
    <property type="project" value="UniProtKB-SubCell"/>
</dbReference>
<dbReference type="GO" id="GO:0003866">
    <property type="term" value="F:3-phosphoshikimate 1-carboxyvinyltransferase activity"/>
    <property type="evidence" value="ECO:0007669"/>
    <property type="project" value="UniProtKB-UniRule"/>
</dbReference>
<dbReference type="GO" id="GO:0008652">
    <property type="term" value="P:amino acid biosynthetic process"/>
    <property type="evidence" value="ECO:0007669"/>
    <property type="project" value="UniProtKB-KW"/>
</dbReference>
<dbReference type="GO" id="GO:0009073">
    <property type="term" value="P:aromatic amino acid family biosynthetic process"/>
    <property type="evidence" value="ECO:0007669"/>
    <property type="project" value="UniProtKB-KW"/>
</dbReference>
<dbReference type="GO" id="GO:0009423">
    <property type="term" value="P:chorismate biosynthetic process"/>
    <property type="evidence" value="ECO:0007669"/>
    <property type="project" value="UniProtKB-UniRule"/>
</dbReference>
<dbReference type="CDD" id="cd01556">
    <property type="entry name" value="EPSP_synthase"/>
    <property type="match status" value="1"/>
</dbReference>
<dbReference type="FunFam" id="3.65.10.10:FF:000005">
    <property type="entry name" value="3-phosphoshikimate 1-carboxyvinyltransferase"/>
    <property type="match status" value="1"/>
</dbReference>
<dbReference type="FunFam" id="3.65.10.10:FF:000006">
    <property type="entry name" value="3-phosphoshikimate 1-carboxyvinyltransferase"/>
    <property type="match status" value="1"/>
</dbReference>
<dbReference type="Gene3D" id="3.65.10.10">
    <property type="entry name" value="Enolpyruvate transferase domain"/>
    <property type="match status" value="2"/>
</dbReference>
<dbReference type="HAMAP" id="MF_00210">
    <property type="entry name" value="EPSP_synth"/>
    <property type="match status" value="1"/>
</dbReference>
<dbReference type="InterPro" id="IPR001986">
    <property type="entry name" value="Enolpyruvate_Tfrase_dom"/>
</dbReference>
<dbReference type="InterPro" id="IPR036968">
    <property type="entry name" value="Enolpyruvate_Tfrase_sf"/>
</dbReference>
<dbReference type="InterPro" id="IPR006264">
    <property type="entry name" value="EPSP_synthase"/>
</dbReference>
<dbReference type="InterPro" id="IPR023193">
    <property type="entry name" value="EPSP_synthase_CS"/>
</dbReference>
<dbReference type="InterPro" id="IPR013792">
    <property type="entry name" value="RNA3'P_cycl/enolpyr_Trfase_a/b"/>
</dbReference>
<dbReference type="NCBIfam" id="TIGR01356">
    <property type="entry name" value="aroA"/>
    <property type="match status" value="1"/>
</dbReference>
<dbReference type="PANTHER" id="PTHR21090">
    <property type="entry name" value="AROM/DEHYDROQUINATE SYNTHASE"/>
    <property type="match status" value="1"/>
</dbReference>
<dbReference type="PANTHER" id="PTHR21090:SF5">
    <property type="entry name" value="PENTAFUNCTIONAL AROM POLYPEPTIDE"/>
    <property type="match status" value="1"/>
</dbReference>
<dbReference type="Pfam" id="PF00275">
    <property type="entry name" value="EPSP_synthase"/>
    <property type="match status" value="1"/>
</dbReference>
<dbReference type="PIRSF" id="PIRSF000505">
    <property type="entry name" value="EPSPS"/>
    <property type="match status" value="1"/>
</dbReference>
<dbReference type="SUPFAM" id="SSF55205">
    <property type="entry name" value="EPT/RTPC-like"/>
    <property type="match status" value="1"/>
</dbReference>
<dbReference type="PROSITE" id="PS00104">
    <property type="entry name" value="EPSP_SYNTHASE_1"/>
    <property type="match status" value="1"/>
</dbReference>
<dbReference type="PROSITE" id="PS00885">
    <property type="entry name" value="EPSP_SYNTHASE_2"/>
    <property type="match status" value="1"/>
</dbReference>
<accession>A5CWH5</accession>
<keyword id="KW-0028">Amino-acid biosynthesis</keyword>
<keyword id="KW-0057">Aromatic amino acid biosynthesis</keyword>
<keyword id="KW-0963">Cytoplasm</keyword>
<keyword id="KW-1185">Reference proteome</keyword>
<keyword id="KW-0808">Transferase</keyword>
<name>AROA_VESOH</name>
<proteinExistence type="inferred from homology"/>
<reference key="1">
    <citation type="journal article" date="2007" name="Curr. Biol.">
        <title>Reduced genome of the thioautotrophic intracellular symbiont in a deep-sea clam, Calyptogena okutanii.</title>
        <authorList>
            <person name="Kuwahara H."/>
            <person name="Yoshida T."/>
            <person name="Takaki Y."/>
            <person name="Shimamura S."/>
            <person name="Nishi S."/>
            <person name="Harada M."/>
            <person name="Matsuyama K."/>
            <person name="Takishita K."/>
            <person name="Kawato M."/>
            <person name="Uematsu K."/>
            <person name="Fujiwara Y."/>
            <person name="Sato T."/>
            <person name="Kato C."/>
            <person name="Kitagawa M."/>
            <person name="Kato I."/>
            <person name="Maruyama T."/>
        </authorList>
    </citation>
    <scope>NUCLEOTIDE SEQUENCE [LARGE SCALE GENOMIC DNA]</scope>
    <source>
        <strain>HA</strain>
    </source>
</reference>
<feature type="chain" id="PRO_0000325399" description="3-phosphoshikimate 1-carboxyvinyltransferase">
    <location>
        <begin position="1"/>
        <end position="435"/>
    </location>
</feature>
<feature type="active site" description="Proton acceptor" evidence="1">
    <location>
        <position position="314"/>
    </location>
</feature>
<feature type="binding site" evidence="1">
    <location>
        <position position="22"/>
    </location>
    <ligand>
        <name>3-phosphoshikimate</name>
        <dbReference type="ChEBI" id="CHEBI:145989"/>
    </ligand>
</feature>
<feature type="binding site" evidence="1">
    <location>
        <position position="22"/>
    </location>
    <ligand>
        <name>phosphoenolpyruvate</name>
        <dbReference type="ChEBI" id="CHEBI:58702"/>
    </ligand>
</feature>
<feature type="binding site" evidence="1">
    <location>
        <position position="23"/>
    </location>
    <ligand>
        <name>3-phosphoshikimate</name>
        <dbReference type="ChEBI" id="CHEBI:145989"/>
    </ligand>
</feature>
<feature type="binding site" evidence="1">
    <location>
        <position position="27"/>
    </location>
    <ligand>
        <name>3-phosphoshikimate</name>
        <dbReference type="ChEBI" id="CHEBI:145989"/>
    </ligand>
</feature>
<feature type="binding site" evidence="1">
    <location>
        <position position="94"/>
    </location>
    <ligand>
        <name>phosphoenolpyruvate</name>
        <dbReference type="ChEBI" id="CHEBI:58702"/>
    </ligand>
</feature>
<feature type="binding site" evidence="1">
    <location>
        <position position="122"/>
    </location>
    <ligand>
        <name>phosphoenolpyruvate</name>
        <dbReference type="ChEBI" id="CHEBI:58702"/>
    </ligand>
</feature>
<feature type="binding site" evidence="1">
    <location>
        <position position="166"/>
    </location>
    <ligand>
        <name>3-phosphoshikimate</name>
        <dbReference type="ChEBI" id="CHEBI:145989"/>
    </ligand>
</feature>
<feature type="binding site" evidence="1">
    <location>
        <position position="168"/>
    </location>
    <ligand>
        <name>3-phosphoshikimate</name>
        <dbReference type="ChEBI" id="CHEBI:145989"/>
    </ligand>
</feature>
<feature type="binding site" evidence="1">
    <location>
        <position position="168"/>
    </location>
    <ligand>
        <name>phosphoenolpyruvate</name>
        <dbReference type="ChEBI" id="CHEBI:58702"/>
    </ligand>
</feature>
<feature type="binding site" evidence="1">
    <location>
        <position position="314"/>
    </location>
    <ligand>
        <name>3-phosphoshikimate</name>
        <dbReference type="ChEBI" id="CHEBI:145989"/>
    </ligand>
</feature>
<feature type="binding site" evidence="1">
    <location>
        <position position="341"/>
    </location>
    <ligand>
        <name>3-phosphoshikimate</name>
        <dbReference type="ChEBI" id="CHEBI:145989"/>
    </ligand>
</feature>
<feature type="binding site" evidence="1">
    <location>
        <position position="345"/>
    </location>
    <ligand>
        <name>phosphoenolpyruvate</name>
        <dbReference type="ChEBI" id="CHEBI:58702"/>
    </ligand>
</feature>
<feature type="binding site" evidence="1">
    <location>
        <position position="388"/>
    </location>
    <ligand>
        <name>phosphoenolpyruvate</name>
        <dbReference type="ChEBI" id="CHEBI:58702"/>
    </ligand>
</feature>
<comment type="function">
    <text evidence="1">Catalyzes the transfer of the enolpyruvyl moiety of phosphoenolpyruvate (PEP) to the 5-hydroxyl of shikimate-3-phosphate (S3P) to produce enolpyruvyl shikimate-3-phosphate and inorganic phosphate.</text>
</comment>
<comment type="catalytic activity">
    <reaction evidence="1">
        <text>3-phosphoshikimate + phosphoenolpyruvate = 5-O-(1-carboxyvinyl)-3-phosphoshikimate + phosphate</text>
        <dbReference type="Rhea" id="RHEA:21256"/>
        <dbReference type="ChEBI" id="CHEBI:43474"/>
        <dbReference type="ChEBI" id="CHEBI:57701"/>
        <dbReference type="ChEBI" id="CHEBI:58702"/>
        <dbReference type="ChEBI" id="CHEBI:145989"/>
        <dbReference type="EC" id="2.5.1.19"/>
    </reaction>
    <physiologicalReaction direction="left-to-right" evidence="1">
        <dbReference type="Rhea" id="RHEA:21257"/>
    </physiologicalReaction>
</comment>
<comment type="pathway">
    <text evidence="1">Metabolic intermediate biosynthesis; chorismate biosynthesis; chorismate from D-erythrose 4-phosphate and phosphoenolpyruvate: step 6/7.</text>
</comment>
<comment type="subunit">
    <text evidence="1">Monomer.</text>
</comment>
<comment type="subcellular location">
    <subcellularLocation>
        <location evidence="1">Cytoplasm</location>
    </subcellularLocation>
</comment>
<comment type="similarity">
    <text evidence="1">Belongs to the EPSP synthase family.</text>
</comment>
<protein>
    <recommendedName>
        <fullName evidence="1">3-phosphoshikimate 1-carboxyvinyltransferase</fullName>
        <ecNumber evidence="1">2.5.1.19</ecNumber>
    </recommendedName>
    <alternativeName>
        <fullName evidence="1">5-enolpyruvylshikimate-3-phosphate synthase</fullName>
        <shortName evidence="1">EPSP synthase</shortName>
        <shortName evidence="1">EPSPS</shortName>
    </alternativeName>
</protein>
<gene>
    <name evidence="1" type="primary">aroA</name>
    <name type="ordered locus">COSY_0576</name>
</gene>
<evidence type="ECO:0000255" key="1">
    <source>
        <dbReference type="HAMAP-Rule" id="MF_00210"/>
    </source>
</evidence>
<sequence length="435" mass="46583">MSKFIINPSNSMYGNLKIPGDKSISHRSIMLGSLANGVTKISGFLEGKDVLSTLKGFQNMGVKIERNSDNVIIYGVGLNGLKKSLVPLNFGNSGTSIRLISGILAAQTFDSELYGDESLSKRPMGRVINPLVQMGALIESNDGKLPIKIKGGQTLKGINYDLPVASAQVKSCILLAGLYAQGETCIKESILTRDHTERMLKGLGYRLDTNKNKICLTGGAQLNAANIQVPSDISSAAFFIVAASIAPQADITLIGVNVNPTRTGIIDILKLMGANLSLSNECVIGGELLANIRIQSAQLKGIRIPKDLVPLAIDEFPAIFIAASCAKGETILTNAKELRVKESDRIQVMADGLSILGIENEVFEDGIKIKGGVFSKPSSTIKSHHDHRISMSFAIASLRCHYAIEIEDVDNVQTSFPNFVELANQIGMNISLVSA</sequence>